<feature type="chain" id="PRO_1000024767" description="Adenosylhomocysteinase">
    <location>
        <begin position="1"/>
        <end position="464"/>
    </location>
</feature>
<feature type="binding site" evidence="1">
    <location>
        <position position="56"/>
    </location>
    <ligand>
        <name>substrate</name>
    </ligand>
</feature>
<feature type="binding site" evidence="1">
    <location>
        <position position="131"/>
    </location>
    <ligand>
        <name>substrate</name>
    </ligand>
</feature>
<feature type="binding site" evidence="1">
    <location>
        <position position="190"/>
    </location>
    <ligand>
        <name>substrate</name>
    </ligand>
</feature>
<feature type="binding site" evidence="1">
    <location>
        <begin position="191"/>
        <end position="193"/>
    </location>
    <ligand>
        <name>NAD(+)</name>
        <dbReference type="ChEBI" id="CHEBI:57540"/>
    </ligand>
</feature>
<feature type="binding site" evidence="1">
    <location>
        <position position="220"/>
    </location>
    <ligand>
        <name>substrate</name>
    </ligand>
</feature>
<feature type="binding site" evidence="1">
    <location>
        <position position="224"/>
    </location>
    <ligand>
        <name>substrate</name>
    </ligand>
</feature>
<feature type="binding site" evidence="1">
    <location>
        <position position="225"/>
    </location>
    <ligand>
        <name>NAD(+)</name>
        <dbReference type="ChEBI" id="CHEBI:57540"/>
    </ligand>
</feature>
<feature type="binding site" evidence="1">
    <location>
        <begin position="254"/>
        <end position="259"/>
    </location>
    <ligand>
        <name>NAD(+)</name>
        <dbReference type="ChEBI" id="CHEBI:57540"/>
    </ligand>
</feature>
<feature type="binding site" evidence="1">
    <location>
        <position position="277"/>
    </location>
    <ligand>
        <name>NAD(+)</name>
        <dbReference type="ChEBI" id="CHEBI:57540"/>
    </ligand>
</feature>
<feature type="binding site" evidence="1">
    <location>
        <position position="312"/>
    </location>
    <ligand>
        <name>NAD(+)</name>
        <dbReference type="ChEBI" id="CHEBI:57540"/>
    </ligand>
</feature>
<feature type="binding site" evidence="1">
    <location>
        <begin position="333"/>
        <end position="335"/>
    </location>
    <ligand>
        <name>NAD(+)</name>
        <dbReference type="ChEBI" id="CHEBI:57540"/>
    </ligand>
</feature>
<feature type="binding site" evidence="1">
    <location>
        <position position="378"/>
    </location>
    <ligand>
        <name>NAD(+)</name>
        <dbReference type="ChEBI" id="CHEBI:57540"/>
    </ligand>
</feature>
<protein>
    <recommendedName>
        <fullName evidence="1">Adenosylhomocysteinase</fullName>
        <ecNumber evidence="1">3.13.2.1</ecNumber>
    </recommendedName>
    <alternativeName>
        <fullName evidence="1">S-adenosyl-L-homocysteine hydrolase</fullName>
        <shortName evidence="1">AdoHcyase</shortName>
    </alternativeName>
</protein>
<proteinExistence type="inferred from homology"/>
<reference key="1">
    <citation type="journal article" date="2005" name="Nat. Biotechnol.">
        <title>The genome sequence of the ethanologenic bacterium Zymomonas mobilis ZM4.</title>
        <authorList>
            <person name="Seo J.-S."/>
            <person name="Chong H."/>
            <person name="Park H.S."/>
            <person name="Yoon K.-O."/>
            <person name="Jung C."/>
            <person name="Kim J.J."/>
            <person name="Hong J.H."/>
            <person name="Kim H."/>
            <person name="Kim J.-H."/>
            <person name="Kil J.-I."/>
            <person name="Park C.J."/>
            <person name="Oh H.-M."/>
            <person name="Lee J.-S."/>
            <person name="Jin S.-J."/>
            <person name="Um H.-W."/>
            <person name="Lee H.-J."/>
            <person name="Oh S.-J."/>
            <person name="Kim J.Y."/>
            <person name="Kang H.L."/>
            <person name="Lee S.Y."/>
            <person name="Lee K.J."/>
            <person name="Kang H.S."/>
        </authorList>
    </citation>
    <scope>NUCLEOTIDE SEQUENCE [LARGE SCALE GENOMIC DNA]</scope>
    <source>
        <strain>ATCC 31821 / ZM4 / CP4</strain>
    </source>
</reference>
<sequence>MANEPYIVRDISLAGWGRKEIDIAEGEMPGLMALREEYAAKKPLKGARITGSLHMTIQTAVLIETLVDLGAEVRWASCNIFSTQDHAAAAIAEQNIPVFAVKGESLEEYWDYVDRIFDWGKGETANMILDDGGDATMFVLWGAKLEAGVEFPAPQNEEEEIFQKTVRRRVAATPGFLTKTAKAIKGVSEETTTGVHRLYEIAKKGELLFPAINVNDSVTKSKFDNLYGCKESLVDAIRRATDVMLAGKVACVAGFGDVGKGSAASLRNGGARVLVTEVDPICALQAAMEGYEVVTLEEAAPRADIFVTCTGNADIITLDHMRAMKQHAIVCNIGHFDSEIQINSLANMKWTEIKPQVDLVKFPDGKEIIVLAKGRLVNLGCATGHPSFVMSASFTNQVLAQIELFCNTDKYQKDVYMLPKHLDEKVAALHLPKLGVHLSKLTQKQADYIGVPVNGPFKPDHYRY</sequence>
<accession>Q5NR48</accession>
<evidence type="ECO:0000255" key="1">
    <source>
        <dbReference type="HAMAP-Rule" id="MF_00563"/>
    </source>
</evidence>
<organism>
    <name type="scientific">Zymomonas mobilis subsp. mobilis (strain ATCC 31821 / ZM4 / CP4)</name>
    <dbReference type="NCBI Taxonomy" id="264203"/>
    <lineage>
        <taxon>Bacteria</taxon>
        <taxon>Pseudomonadati</taxon>
        <taxon>Pseudomonadota</taxon>
        <taxon>Alphaproteobacteria</taxon>
        <taxon>Sphingomonadales</taxon>
        <taxon>Zymomonadaceae</taxon>
        <taxon>Zymomonas</taxon>
    </lineage>
</organism>
<gene>
    <name evidence="1" type="primary">ahcY</name>
    <name type="ordered locus">ZMO0182</name>
</gene>
<comment type="function">
    <text evidence="1">May play a key role in the regulation of the intracellular concentration of adenosylhomocysteine.</text>
</comment>
<comment type="catalytic activity">
    <reaction evidence="1">
        <text>S-adenosyl-L-homocysteine + H2O = L-homocysteine + adenosine</text>
        <dbReference type="Rhea" id="RHEA:21708"/>
        <dbReference type="ChEBI" id="CHEBI:15377"/>
        <dbReference type="ChEBI" id="CHEBI:16335"/>
        <dbReference type="ChEBI" id="CHEBI:57856"/>
        <dbReference type="ChEBI" id="CHEBI:58199"/>
        <dbReference type="EC" id="3.13.2.1"/>
    </reaction>
</comment>
<comment type="cofactor">
    <cofactor evidence="1">
        <name>NAD(+)</name>
        <dbReference type="ChEBI" id="CHEBI:57540"/>
    </cofactor>
    <text evidence="1">Binds 1 NAD(+) per subunit.</text>
</comment>
<comment type="pathway">
    <text evidence="1">Amino-acid biosynthesis; L-homocysteine biosynthesis; L-homocysteine from S-adenosyl-L-homocysteine: step 1/1.</text>
</comment>
<comment type="subcellular location">
    <subcellularLocation>
        <location evidence="1">Cytoplasm</location>
    </subcellularLocation>
</comment>
<comment type="similarity">
    <text evidence="1">Belongs to the adenosylhomocysteinase family.</text>
</comment>
<keyword id="KW-0963">Cytoplasm</keyword>
<keyword id="KW-0378">Hydrolase</keyword>
<keyword id="KW-0520">NAD</keyword>
<keyword id="KW-0554">One-carbon metabolism</keyword>
<keyword id="KW-1185">Reference proteome</keyword>
<name>SAHH_ZYMMO</name>
<dbReference type="EC" id="3.13.2.1" evidence="1"/>
<dbReference type="EMBL" id="AE008692">
    <property type="protein sequence ID" value="AAV88806.1"/>
    <property type="molecule type" value="Genomic_DNA"/>
</dbReference>
<dbReference type="RefSeq" id="WP_011240136.1">
    <property type="nucleotide sequence ID" value="NZ_CP035711.1"/>
</dbReference>
<dbReference type="SMR" id="Q5NR48"/>
<dbReference type="STRING" id="264203.ZMO0182"/>
<dbReference type="KEGG" id="zmo:ZMO0182"/>
<dbReference type="eggNOG" id="COG0499">
    <property type="taxonomic scope" value="Bacteria"/>
</dbReference>
<dbReference type="HOGENOM" id="CLU_025194_2_1_5"/>
<dbReference type="UniPathway" id="UPA00314">
    <property type="reaction ID" value="UER00076"/>
</dbReference>
<dbReference type="Proteomes" id="UP000001173">
    <property type="component" value="Chromosome"/>
</dbReference>
<dbReference type="GO" id="GO:0005829">
    <property type="term" value="C:cytosol"/>
    <property type="evidence" value="ECO:0007669"/>
    <property type="project" value="TreeGrafter"/>
</dbReference>
<dbReference type="GO" id="GO:0004013">
    <property type="term" value="F:adenosylhomocysteinase activity"/>
    <property type="evidence" value="ECO:0007669"/>
    <property type="project" value="UniProtKB-UniRule"/>
</dbReference>
<dbReference type="GO" id="GO:0071269">
    <property type="term" value="P:L-homocysteine biosynthetic process"/>
    <property type="evidence" value="ECO:0007669"/>
    <property type="project" value="UniProtKB-UniRule"/>
</dbReference>
<dbReference type="GO" id="GO:0006730">
    <property type="term" value="P:one-carbon metabolic process"/>
    <property type="evidence" value="ECO:0007669"/>
    <property type="project" value="UniProtKB-KW"/>
</dbReference>
<dbReference type="GO" id="GO:0033353">
    <property type="term" value="P:S-adenosylmethionine cycle"/>
    <property type="evidence" value="ECO:0007669"/>
    <property type="project" value="TreeGrafter"/>
</dbReference>
<dbReference type="CDD" id="cd00401">
    <property type="entry name" value="SAHH"/>
    <property type="match status" value="1"/>
</dbReference>
<dbReference type="FunFam" id="3.40.50.720:FF:000004">
    <property type="entry name" value="Adenosylhomocysteinase"/>
    <property type="match status" value="1"/>
</dbReference>
<dbReference type="Gene3D" id="3.40.50.1480">
    <property type="entry name" value="Adenosylhomocysteinase-like"/>
    <property type="match status" value="1"/>
</dbReference>
<dbReference type="Gene3D" id="3.40.50.720">
    <property type="entry name" value="NAD(P)-binding Rossmann-like Domain"/>
    <property type="match status" value="1"/>
</dbReference>
<dbReference type="HAMAP" id="MF_00563">
    <property type="entry name" value="AdoHcyase"/>
    <property type="match status" value="1"/>
</dbReference>
<dbReference type="InterPro" id="IPR042172">
    <property type="entry name" value="Adenosylhomocyst_ase-like_sf"/>
</dbReference>
<dbReference type="InterPro" id="IPR000043">
    <property type="entry name" value="Adenosylhomocysteinase-like"/>
</dbReference>
<dbReference type="InterPro" id="IPR015878">
    <property type="entry name" value="Ado_hCys_hydrolase_NAD-bd"/>
</dbReference>
<dbReference type="InterPro" id="IPR036291">
    <property type="entry name" value="NAD(P)-bd_dom_sf"/>
</dbReference>
<dbReference type="InterPro" id="IPR020082">
    <property type="entry name" value="S-Ado-L-homoCys_hydrolase_CS"/>
</dbReference>
<dbReference type="NCBIfam" id="TIGR00936">
    <property type="entry name" value="ahcY"/>
    <property type="match status" value="1"/>
</dbReference>
<dbReference type="NCBIfam" id="NF004005">
    <property type="entry name" value="PRK05476.2-3"/>
    <property type="match status" value="1"/>
</dbReference>
<dbReference type="PANTHER" id="PTHR23420">
    <property type="entry name" value="ADENOSYLHOMOCYSTEINASE"/>
    <property type="match status" value="1"/>
</dbReference>
<dbReference type="PANTHER" id="PTHR23420:SF0">
    <property type="entry name" value="ADENOSYLHOMOCYSTEINASE"/>
    <property type="match status" value="1"/>
</dbReference>
<dbReference type="Pfam" id="PF05221">
    <property type="entry name" value="AdoHcyase"/>
    <property type="match status" value="1"/>
</dbReference>
<dbReference type="Pfam" id="PF00670">
    <property type="entry name" value="AdoHcyase_NAD"/>
    <property type="match status" value="1"/>
</dbReference>
<dbReference type="PIRSF" id="PIRSF001109">
    <property type="entry name" value="Ad_hcy_hydrolase"/>
    <property type="match status" value="1"/>
</dbReference>
<dbReference type="SMART" id="SM00996">
    <property type="entry name" value="AdoHcyase"/>
    <property type="match status" value="1"/>
</dbReference>
<dbReference type="SMART" id="SM00997">
    <property type="entry name" value="AdoHcyase_NAD"/>
    <property type="match status" value="1"/>
</dbReference>
<dbReference type="SUPFAM" id="SSF52283">
    <property type="entry name" value="Formate/glycerate dehydrogenase catalytic domain-like"/>
    <property type="match status" value="1"/>
</dbReference>
<dbReference type="SUPFAM" id="SSF51735">
    <property type="entry name" value="NAD(P)-binding Rossmann-fold domains"/>
    <property type="match status" value="1"/>
</dbReference>
<dbReference type="PROSITE" id="PS00738">
    <property type="entry name" value="ADOHCYASE_1"/>
    <property type="match status" value="1"/>
</dbReference>
<dbReference type="PROSITE" id="PS00739">
    <property type="entry name" value="ADOHCYASE_2"/>
    <property type="match status" value="1"/>
</dbReference>